<reference key="1">
    <citation type="journal article" date="2005" name="Genome Res.">
        <title>The Chlamydophila abortus genome sequence reveals an array of variable proteins that contribute to interspecies variation.</title>
        <authorList>
            <person name="Thomson N.R."/>
            <person name="Yeats C."/>
            <person name="Bell K."/>
            <person name="Holden M.T.G."/>
            <person name="Bentley S.D."/>
            <person name="Livingstone M."/>
            <person name="Cerdeno-Tarraga A.-M."/>
            <person name="Harris B."/>
            <person name="Doggett J."/>
            <person name="Ormond D."/>
            <person name="Mungall K."/>
            <person name="Clarke K."/>
            <person name="Feltwell T."/>
            <person name="Hance Z."/>
            <person name="Sanders M."/>
            <person name="Quail M.A."/>
            <person name="Price C."/>
            <person name="Barrell B.G."/>
            <person name="Parkhill J."/>
            <person name="Longbottom D."/>
        </authorList>
    </citation>
    <scope>NUCLEOTIDE SEQUENCE [LARGE SCALE GENOMIC DNA]</scope>
    <source>
        <strain>DSM 27085 / S26/3</strain>
    </source>
</reference>
<name>RS14_CHLAB</name>
<sequence>MAKKSAVARENKRRKLVEANYKKRSELRKIAKSLTASEEEKENARVALNKMKRDTAPIRLHNRCLLTGRPRGYLRKFAISRICFRQMASMGEIPGVVKASW</sequence>
<dbReference type="EMBL" id="CR848038">
    <property type="protein sequence ID" value="CAH64244.1"/>
    <property type="molecule type" value="Genomic_DNA"/>
</dbReference>
<dbReference type="RefSeq" id="WP_006344408.1">
    <property type="nucleotide sequence ID" value="NC_004552.2"/>
</dbReference>
<dbReference type="SMR" id="Q5L550"/>
<dbReference type="KEGG" id="cab:CAB802"/>
<dbReference type="eggNOG" id="COG0199">
    <property type="taxonomic scope" value="Bacteria"/>
</dbReference>
<dbReference type="HOGENOM" id="CLU_139869_0_1_0"/>
<dbReference type="OrthoDB" id="9810484at2"/>
<dbReference type="Proteomes" id="UP000001012">
    <property type="component" value="Chromosome"/>
</dbReference>
<dbReference type="GO" id="GO:0005737">
    <property type="term" value="C:cytoplasm"/>
    <property type="evidence" value="ECO:0007669"/>
    <property type="project" value="UniProtKB-ARBA"/>
</dbReference>
<dbReference type="GO" id="GO:0015935">
    <property type="term" value="C:small ribosomal subunit"/>
    <property type="evidence" value="ECO:0007669"/>
    <property type="project" value="TreeGrafter"/>
</dbReference>
<dbReference type="GO" id="GO:0019843">
    <property type="term" value="F:rRNA binding"/>
    <property type="evidence" value="ECO:0007669"/>
    <property type="project" value="UniProtKB-UniRule"/>
</dbReference>
<dbReference type="GO" id="GO:0003735">
    <property type="term" value="F:structural constituent of ribosome"/>
    <property type="evidence" value="ECO:0007669"/>
    <property type="project" value="InterPro"/>
</dbReference>
<dbReference type="GO" id="GO:0006412">
    <property type="term" value="P:translation"/>
    <property type="evidence" value="ECO:0007669"/>
    <property type="project" value="UniProtKB-UniRule"/>
</dbReference>
<dbReference type="FunFam" id="1.10.287.1480:FF:000001">
    <property type="entry name" value="30S ribosomal protein S14"/>
    <property type="match status" value="1"/>
</dbReference>
<dbReference type="Gene3D" id="1.10.287.1480">
    <property type="match status" value="1"/>
</dbReference>
<dbReference type="HAMAP" id="MF_00537">
    <property type="entry name" value="Ribosomal_uS14_1"/>
    <property type="match status" value="1"/>
</dbReference>
<dbReference type="InterPro" id="IPR001209">
    <property type="entry name" value="Ribosomal_uS14"/>
</dbReference>
<dbReference type="InterPro" id="IPR023036">
    <property type="entry name" value="Ribosomal_uS14_bac/plastid"/>
</dbReference>
<dbReference type="InterPro" id="IPR018271">
    <property type="entry name" value="Ribosomal_uS14_CS"/>
</dbReference>
<dbReference type="NCBIfam" id="NF006477">
    <property type="entry name" value="PRK08881.1"/>
    <property type="match status" value="1"/>
</dbReference>
<dbReference type="PANTHER" id="PTHR19836">
    <property type="entry name" value="30S RIBOSOMAL PROTEIN S14"/>
    <property type="match status" value="1"/>
</dbReference>
<dbReference type="PANTHER" id="PTHR19836:SF19">
    <property type="entry name" value="SMALL RIBOSOMAL SUBUNIT PROTEIN US14M"/>
    <property type="match status" value="1"/>
</dbReference>
<dbReference type="Pfam" id="PF00253">
    <property type="entry name" value="Ribosomal_S14"/>
    <property type="match status" value="1"/>
</dbReference>
<dbReference type="SUPFAM" id="SSF57716">
    <property type="entry name" value="Glucocorticoid receptor-like (DNA-binding domain)"/>
    <property type="match status" value="1"/>
</dbReference>
<dbReference type="PROSITE" id="PS00527">
    <property type="entry name" value="RIBOSOMAL_S14"/>
    <property type="match status" value="1"/>
</dbReference>
<accession>Q5L550</accession>
<gene>
    <name evidence="1" type="primary">rpsN</name>
    <name type="ordered locus">CAB802</name>
</gene>
<keyword id="KW-0687">Ribonucleoprotein</keyword>
<keyword id="KW-0689">Ribosomal protein</keyword>
<keyword id="KW-0694">RNA-binding</keyword>
<keyword id="KW-0699">rRNA-binding</keyword>
<feature type="chain" id="PRO_1000128349" description="Small ribosomal subunit protein uS14">
    <location>
        <begin position="1"/>
        <end position="101"/>
    </location>
</feature>
<protein>
    <recommendedName>
        <fullName evidence="1">Small ribosomal subunit protein uS14</fullName>
    </recommendedName>
    <alternativeName>
        <fullName evidence="2">30S ribosomal protein S14</fullName>
    </alternativeName>
</protein>
<proteinExistence type="inferred from homology"/>
<comment type="function">
    <text evidence="1">Binds 16S rRNA, required for the assembly of 30S particles and may also be responsible for determining the conformation of the 16S rRNA at the A site.</text>
</comment>
<comment type="subunit">
    <text evidence="1">Part of the 30S ribosomal subunit. Contacts proteins S3 and S10.</text>
</comment>
<comment type="similarity">
    <text evidence="1">Belongs to the universal ribosomal protein uS14 family.</text>
</comment>
<organism>
    <name type="scientific">Chlamydia abortus (strain DSM 27085 / S26/3)</name>
    <name type="common">Chlamydophila abortus</name>
    <dbReference type="NCBI Taxonomy" id="218497"/>
    <lineage>
        <taxon>Bacteria</taxon>
        <taxon>Pseudomonadati</taxon>
        <taxon>Chlamydiota</taxon>
        <taxon>Chlamydiia</taxon>
        <taxon>Chlamydiales</taxon>
        <taxon>Chlamydiaceae</taxon>
        <taxon>Chlamydia/Chlamydophila group</taxon>
        <taxon>Chlamydia</taxon>
    </lineage>
</organism>
<evidence type="ECO:0000255" key="1">
    <source>
        <dbReference type="HAMAP-Rule" id="MF_00537"/>
    </source>
</evidence>
<evidence type="ECO:0000305" key="2"/>